<name>BETV6_BETPN</name>
<reference key="1">
    <citation type="journal article" date="1999" name="J. Allergy Clin. Immunol.">
        <title>Molecular cloning and characterization of a birch pollen minor allergen, Bet v 5, belonging to a family of isoflavone reductase-related proteins.</title>
        <authorList>
            <person name="Karamloo F."/>
            <person name="Schmitz N."/>
            <person name="Scheurer S."/>
            <person name="Foetisch K."/>
            <person name="Hoffmann A."/>
            <person name="Haustein D."/>
            <person name="Vieths S."/>
        </authorList>
    </citation>
    <scope>NUCLEOTIDE SEQUENCE [MRNA]</scope>
    <scope>ALLERGEN</scope>
    <source>
        <tissue>Pollen</tissue>
    </source>
</reference>
<reference key="2">
    <citation type="journal article" date="2001" name="Eur. J. Biochem.">
        <title>Phenylcoumaran benzylic ether and isoflavonoid reductases are a new class of cross-reactive allergens in birch pollen, fruits and vegetables.</title>
        <authorList>
            <person name="Karamloo F."/>
            <person name="Wangorsch A."/>
            <person name="Kasahara H."/>
            <person name="Davin L.B."/>
            <person name="Haustein D."/>
            <person name="Lewis N.G."/>
            <person name="Vieths S."/>
        </authorList>
    </citation>
    <scope>NUCLEOTIDE SEQUENCE [MRNA]</scope>
    <scope>FUNCTION</scope>
    <scope>CATALYTIC ACTIVITY</scope>
    <scope>ALLERGEN</scope>
    <source>
        <tissue>Pollen</tissue>
    </source>
</reference>
<reference key="3">
    <citation type="journal article" date="1998" name="Scand. J. Immunol.">
        <title>Characterization of a new IgE-binding 35-kDa protein from birch pollen with cross-reacting homologues in various plant foods.</title>
        <authorList>
            <person name="Vieths S."/>
            <person name="Frank E."/>
            <person name="Scheurer S."/>
            <person name="Meyer H.E."/>
            <person name="Hrazdina G."/>
            <person name="Haustein D."/>
        </authorList>
    </citation>
    <scope>NUCLEOTIDE SEQUENCE [MRNA] OF 1-300</scope>
    <scope>PROTEIN SEQUENCE OF 176-200</scope>
    <scope>ALLERGEN</scope>
    <source>
        <tissue>Pollen</tissue>
    </source>
</reference>
<accession>Q9FUW6</accession>
<accession>O65002</accession>
<proteinExistence type="evidence at protein level"/>
<gene>
    <name evidence="5" type="primary">BETV6</name>
</gene>
<keyword id="KW-0020">Allergen</keyword>
<keyword id="KW-0903">Direct protein sequencing</keyword>
<keyword id="KW-0521">NADP</keyword>
<keyword id="KW-0560">Oxidoreductase</keyword>
<sequence length="308" mass="34190">MAHKSKILIIGGTGYIGKFIVEASAKSGHPTFALVRESTVSDPVKGKLVEKFKGLGVTLLHGDLYDHESLVKAFKQVDVVISTVGHLQLADQVKIIAAIKEAGNIKRFFPSEFGNDVDRVHAVEPAKTAFATKAEIRRKTEAEGIPYTYVSSNFFAGYFLPTLAQPGLTSPPREKVVIFGDGNARAVFNKEDDIGTYTIRAVDDPRTLNKIVYIKPAKNIYSFNEIVALWEKKIGKTLEKIYVPEEKLLKDIQESPIPINVILAINHSVFVKGDHTNFEIEASFGVEASELYPDVKYTTVEEYLQQFV</sequence>
<dbReference type="EC" id="1.23.1.-" evidence="3"/>
<dbReference type="EMBL" id="AF282850">
    <property type="protein sequence ID" value="AAG22740.1"/>
    <property type="molecule type" value="mRNA"/>
</dbReference>
<dbReference type="EMBL" id="AF135127">
    <property type="protein sequence ID" value="AAC05116.2"/>
    <property type="molecule type" value="mRNA"/>
</dbReference>
<dbReference type="PIR" id="T08106">
    <property type="entry name" value="T08106"/>
</dbReference>
<dbReference type="SMR" id="Q9FUW6"/>
<dbReference type="Allergome" id="131">
    <property type="allergen name" value="Bet v 6"/>
</dbReference>
<dbReference type="Allergome" id="132">
    <property type="allergen name" value="Bet v 6.0101"/>
</dbReference>
<dbReference type="Allergome" id="133">
    <property type="allergen name" value="Bet v 6.0102"/>
</dbReference>
<dbReference type="GO" id="GO:0016491">
    <property type="term" value="F:oxidoreductase activity"/>
    <property type="evidence" value="ECO:0007669"/>
    <property type="project" value="UniProtKB-KW"/>
</dbReference>
<dbReference type="GO" id="GO:0009807">
    <property type="term" value="P:lignan biosynthetic process"/>
    <property type="evidence" value="ECO:0007669"/>
    <property type="project" value="UniProtKB-ARBA"/>
</dbReference>
<dbReference type="CDD" id="cd05259">
    <property type="entry name" value="PCBER_SDR_a"/>
    <property type="match status" value="1"/>
</dbReference>
<dbReference type="Gene3D" id="3.40.50.720">
    <property type="entry name" value="NAD(P)-binding Rossmann-like Domain"/>
    <property type="match status" value="1"/>
</dbReference>
<dbReference type="Gene3D" id="3.90.25.10">
    <property type="entry name" value="UDP-galactose 4-epimerase, domain 1"/>
    <property type="match status" value="1"/>
</dbReference>
<dbReference type="InterPro" id="IPR036291">
    <property type="entry name" value="NAD(P)-bd_dom_sf"/>
</dbReference>
<dbReference type="InterPro" id="IPR008030">
    <property type="entry name" value="NmrA-like"/>
</dbReference>
<dbReference type="InterPro" id="IPR050608">
    <property type="entry name" value="NmrA-type/Isoflavone_red_sf"/>
</dbReference>
<dbReference type="InterPro" id="IPR045312">
    <property type="entry name" value="PCBER-like"/>
</dbReference>
<dbReference type="PANTHER" id="PTHR43349:SF35">
    <property type="entry name" value="PHENYLCOUMARAN BENZYLIC ETHER REDUCTASE 1"/>
    <property type="match status" value="1"/>
</dbReference>
<dbReference type="PANTHER" id="PTHR43349">
    <property type="entry name" value="PINORESINOL REDUCTASE-RELATED"/>
    <property type="match status" value="1"/>
</dbReference>
<dbReference type="Pfam" id="PF05368">
    <property type="entry name" value="NmrA"/>
    <property type="match status" value="1"/>
</dbReference>
<dbReference type="SUPFAM" id="SSF51735">
    <property type="entry name" value="NAD(P)-binding Rossmann-fold domains"/>
    <property type="match status" value="1"/>
</dbReference>
<feature type="chain" id="PRO_0000447190" description="Phenylcoumaran benzylic ether reductase Betv6">
    <location>
        <begin position="1"/>
        <end position="308"/>
    </location>
</feature>
<feature type="active site" description="Proton acceptor" evidence="1">
    <location>
        <position position="133"/>
    </location>
</feature>
<feature type="binding site" evidence="7">
    <location>
        <begin position="11"/>
        <end position="17"/>
    </location>
    <ligand>
        <name>NADP(+)</name>
        <dbReference type="ChEBI" id="CHEBI:58349"/>
    </ligand>
</feature>
<feature type="binding site" evidence="1">
    <location>
        <position position="36"/>
    </location>
    <ligand>
        <name>NADP(+)</name>
        <dbReference type="ChEBI" id="CHEBI:58349"/>
    </ligand>
</feature>
<feature type="binding site" evidence="1">
    <location>
        <position position="45"/>
    </location>
    <ligand>
        <name>NADP(+)</name>
        <dbReference type="ChEBI" id="CHEBI:58349"/>
    </ligand>
</feature>
<feature type="binding site" evidence="1">
    <location>
        <position position="137"/>
    </location>
    <ligand>
        <name>NADP(+)</name>
        <dbReference type="ChEBI" id="CHEBI:58349"/>
    </ligand>
</feature>
<organism>
    <name type="scientific">Betula pendula</name>
    <name type="common">European white birch</name>
    <name type="synonym">Betula verrucosa</name>
    <dbReference type="NCBI Taxonomy" id="3505"/>
    <lineage>
        <taxon>Eukaryota</taxon>
        <taxon>Viridiplantae</taxon>
        <taxon>Streptophyta</taxon>
        <taxon>Embryophyta</taxon>
        <taxon>Tracheophyta</taxon>
        <taxon>Spermatophyta</taxon>
        <taxon>Magnoliopsida</taxon>
        <taxon>eudicotyledons</taxon>
        <taxon>Gunneridae</taxon>
        <taxon>Pentapetalae</taxon>
        <taxon>rosids</taxon>
        <taxon>fabids</taxon>
        <taxon>Fagales</taxon>
        <taxon>Betulaceae</taxon>
        <taxon>Betula</taxon>
    </lineage>
</organism>
<protein>
    <recommendedName>
        <fullName evidence="6">Phenylcoumaran benzylic ether reductase Betv6</fullName>
        <ecNumber evidence="3">1.23.1.-</ecNumber>
    </recommendedName>
    <alternativeName>
        <fullName evidence="5">Minor pollen allergen Bet v 6</fullName>
    </alternativeName>
    <allergenName evidence="5">Bet v 6</allergenName>
</protein>
<comment type="function">
    <text evidence="3">Oxidoreductase involved in lignan biosynthesis (PubMed:11606193). Catalyzes the NADPH-dependent reduction of phenylcoumaran benzylic ethers (PubMed:11606193). Converts dehydrodiconiferyl alcohol (DDC) to isodihydrodehydrodiconiferyl alcohol (IDDDC) (PubMed:11606193).</text>
</comment>
<comment type="catalytic activity">
    <reaction evidence="3">
        <text>(-)-dehydrodiconiferyl alcohol + NADPH + H(+) = (S)-isodihydrodehydrodiconiferyl alcohol + NADP(+)</text>
        <dbReference type="Rhea" id="RHEA:59440"/>
        <dbReference type="ChEBI" id="CHEBI:15378"/>
        <dbReference type="ChEBI" id="CHEBI:57783"/>
        <dbReference type="ChEBI" id="CHEBI:58349"/>
        <dbReference type="ChEBI" id="CHEBI:70467"/>
        <dbReference type="ChEBI" id="CHEBI:143259"/>
    </reaction>
</comment>
<comment type="catalytic activity">
    <reaction evidence="3">
        <text>(+)-dehydrodiconiferyl alcohol + NADPH + H(+) = (R)-isodihydrodehydrodiconiferyl alcohol + NADP(+)</text>
        <dbReference type="Rhea" id="RHEA:59844"/>
        <dbReference type="ChEBI" id="CHEBI:15378"/>
        <dbReference type="ChEBI" id="CHEBI:57783"/>
        <dbReference type="ChEBI" id="CHEBI:58349"/>
        <dbReference type="ChEBI" id="CHEBI:143256"/>
        <dbReference type="ChEBI" id="CHEBI:143260"/>
    </reaction>
</comment>
<comment type="allergen">
    <text evidence="2 3 4">May cause an allergic reaction in human (PubMed:10550744, PubMed:11606193, PubMed:9519865). Binds to IgE from patients allergic to birch pollen (PubMed:10550744, PubMed:11606193, PubMed:9519865). Induces histamine release from basophils of patient allergic to the birch pollen protein Bet v 6 (PubMed:10550744). Exhibits cross-reactivity with IgE from patients allergic to fruits and vegetables (PubMed:10550744, PubMed:11606193, PubMed:9519865). May be a minor allergen of birch pollen (PubMed:10550744, PubMed:11606193, PubMed:9519865).</text>
</comment>
<comment type="similarity">
    <text evidence="6">Belongs to the NmrA-type oxidoreductase family. Isoflavone reductase subfamily.</text>
</comment>
<evidence type="ECO:0000250" key="1">
    <source>
        <dbReference type="UniProtKB" id="Q9LD14"/>
    </source>
</evidence>
<evidence type="ECO:0000269" key="2">
    <source>
    </source>
</evidence>
<evidence type="ECO:0000269" key="3">
    <source>
    </source>
</evidence>
<evidence type="ECO:0000269" key="4">
    <source>
    </source>
</evidence>
<evidence type="ECO:0000303" key="5">
    <source>
    </source>
</evidence>
<evidence type="ECO:0000305" key="6"/>
<evidence type="ECO:0000305" key="7">
    <source>
    </source>
</evidence>